<protein>
    <recommendedName>
        <fullName evidence="1">Glutamate--tRNA ligase</fullName>
        <ecNumber evidence="1">6.1.1.17</ecNumber>
    </recommendedName>
    <alternativeName>
        <fullName evidence="1">Glutamyl-tRNA synthetase</fullName>
        <shortName evidence="1">GluRS</shortName>
    </alternativeName>
</protein>
<sequence>MSETKRVRVRYAPSPTGFLHIGNARTALFNYLFARHNDGDFIIRIEDTDAKRNVADGEESQMKNLKWLGMDWDEGVDVPGKYGPYRQSERQSIYEPLIQQLLDEGLAYKCYCTEEELEAEREKQKANNEMPRYSGKCRHLTKEQQAEKEAQGFKPSIRFKVPANETITFNDMVKDDVSFESNGIGDFVIAKKDGIPTYNFAVAVDDHLMEISHVLRGDDHISNTPKQILIYNAFGWEPPTFGHMTLIVNESRRKLSKRDGSIIQFIEQYRDLGYLPEALFNFIAMLGWSPEGEEEIFSKEEFIKMFDPKRLSKSPALFDNVKLTWVNNQYVKKLPLNDVVELSLPHLQKAGVVSADLDQAELDWVHKLVSLYHEQMSYGAEIVPLSEMFFADAEAITFDEEEKAVLAEDTVPTVISAFKKELEALEVLEAAEVKAAIKRVQKETGVKGKGLFMPIRIVTTGEMHGPELPLAIEVLGREKVLNRMDTWLKNN</sequence>
<dbReference type="EC" id="6.1.1.17" evidence="1"/>
<dbReference type="EMBL" id="AM263198">
    <property type="protein sequence ID" value="CAK19618.1"/>
    <property type="molecule type" value="Genomic_DNA"/>
</dbReference>
<dbReference type="RefSeq" id="WP_011701063.1">
    <property type="nucleotide sequence ID" value="NC_008555.1"/>
</dbReference>
<dbReference type="SMR" id="A0AF36"/>
<dbReference type="STRING" id="386043.lwe0200"/>
<dbReference type="GeneID" id="61188093"/>
<dbReference type="KEGG" id="lwe:lwe0200"/>
<dbReference type="eggNOG" id="COG0008">
    <property type="taxonomic scope" value="Bacteria"/>
</dbReference>
<dbReference type="HOGENOM" id="CLU_015768_6_1_9"/>
<dbReference type="OrthoDB" id="9807503at2"/>
<dbReference type="Proteomes" id="UP000000779">
    <property type="component" value="Chromosome"/>
</dbReference>
<dbReference type="GO" id="GO:0005829">
    <property type="term" value="C:cytosol"/>
    <property type="evidence" value="ECO:0007669"/>
    <property type="project" value="TreeGrafter"/>
</dbReference>
<dbReference type="GO" id="GO:0005524">
    <property type="term" value="F:ATP binding"/>
    <property type="evidence" value="ECO:0007669"/>
    <property type="project" value="UniProtKB-UniRule"/>
</dbReference>
<dbReference type="GO" id="GO:0004818">
    <property type="term" value="F:glutamate-tRNA ligase activity"/>
    <property type="evidence" value="ECO:0007669"/>
    <property type="project" value="UniProtKB-UniRule"/>
</dbReference>
<dbReference type="GO" id="GO:0000049">
    <property type="term" value="F:tRNA binding"/>
    <property type="evidence" value="ECO:0007669"/>
    <property type="project" value="InterPro"/>
</dbReference>
<dbReference type="GO" id="GO:0008270">
    <property type="term" value="F:zinc ion binding"/>
    <property type="evidence" value="ECO:0007669"/>
    <property type="project" value="UniProtKB-UniRule"/>
</dbReference>
<dbReference type="GO" id="GO:0006424">
    <property type="term" value="P:glutamyl-tRNA aminoacylation"/>
    <property type="evidence" value="ECO:0007669"/>
    <property type="project" value="UniProtKB-UniRule"/>
</dbReference>
<dbReference type="CDD" id="cd00808">
    <property type="entry name" value="GluRS_core"/>
    <property type="match status" value="1"/>
</dbReference>
<dbReference type="FunFam" id="1.10.10.350:FF:000002">
    <property type="entry name" value="Glutamate--tRNA ligase"/>
    <property type="match status" value="1"/>
</dbReference>
<dbReference type="FunFam" id="3.40.50.620:FF:000007">
    <property type="entry name" value="Glutamate--tRNA ligase"/>
    <property type="match status" value="1"/>
</dbReference>
<dbReference type="Gene3D" id="1.10.10.350">
    <property type="match status" value="1"/>
</dbReference>
<dbReference type="Gene3D" id="3.40.50.620">
    <property type="entry name" value="HUPs"/>
    <property type="match status" value="1"/>
</dbReference>
<dbReference type="HAMAP" id="MF_00022">
    <property type="entry name" value="Glu_tRNA_synth_type1"/>
    <property type="match status" value="1"/>
</dbReference>
<dbReference type="InterPro" id="IPR045462">
    <property type="entry name" value="aa-tRNA-synth_I_cd-bd"/>
</dbReference>
<dbReference type="InterPro" id="IPR020751">
    <property type="entry name" value="aa-tRNA-synth_I_codon-bd_sub2"/>
</dbReference>
<dbReference type="InterPro" id="IPR001412">
    <property type="entry name" value="aa-tRNA-synth_I_CS"/>
</dbReference>
<dbReference type="InterPro" id="IPR008925">
    <property type="entry name" value="aa_tRNA-synth_I_cd-bd_sf"/>
</dbReference>
<dbReference type="InterPro" id="IPR004527">
    <property type="entry name" value="Glu-tRNA-ligase_bac/mito"/>
</dbReference>
<dbReference type="InterPro" id="IPR000924">
    <property type="entry name" value="Glu/Gln-tRNA-synth"/>
</dbReference>
<dbReference type="InterPro" id="IPR020058">
    <property type="entry name" value="Glu/Gln-tRNA-synth_Ib_cat-dom"/>
</dbReference>
<dbReference type="InterPro" id="IPR049940">
    <property type="entry name" value="GluQ/Sye"/>
</dbReference>
<dbReference type="InterPro" id="IPR033910">
    <property type="entry name" value="GluRS_core"/>
</dbReference>
<dbReference type="InterPro" id="IPR014729">
    <property type="entry name" value="Rossmann-like_a/b/a_fold"/>
</dbReference>
<dbReference type="NCBIfam" id="TIGR00464">
    <property type="entry name" value="gltX_bact"/>
    <property type="match status" value="1"/>
</dbReference>
<dbReference type="PANTHER" id="PTHR43311">
    <property type="entry name" value="GLUTAMATE--TRNA LIGASE"/>
    <property type="match status" value="1"/>
</dbReference>
<dbReference type="PANTHER" id="PTHR43311:SF2">
    <property type="entry name" value="GLUTAMATE--TRNA LIGASE, MITOCHONDRIAL-RELATED"/>
    <property type="match status" value="1"/>
</dbReference>
<dbReference type="Pfam" id="PF19269">
    <property type="entry name" value="Anticodon_2"/>
    <property type="match status" value="1"/>
</dbReference>
<dbReference type="Pfam" id="PF00749">
    <property type="entry name" value="tRNA-synt_1c"/>
    <property type="match status" value="1"/>
</dbReference>
<dbReference type="PRINTS" id="PR00987">
    <property type="entry name" value="TRNASYNTHGLU"/>
</dbReference>
<dbReference type="SUPFAM" id="SSF48163">
    <property type="entry name" value="An anticodon-binding domain of class I aminoacyl-tRNA synthetases"/>
    <property type="match status" value="1"/>
</dbReference>
<dbReference type="SUPFAM" id="SSF52374">
    <property type="entry name" value="Nucleotidylyl transferase"/>
    <property type="match status" value="1"/>
</dbReference>
<dbReference type="PROSITE" id="PS00178">
    <property type="entry name" value="AA_TRNA_LIGASE_I"/>
    <property type="match status" value="1"/>
</dbReference>
<keyword id="KW-0030">Aminoacyl-tRNA synthetase</keyword>
<keyword id="KW-0067">ATP-binding</keyword>
<keyword id="KW-0963">Cytoplasm</keyword>
<keyword id="KW-0436">Ligase</keyword>
<keyword id="KW-0479">Metal-binding</keyword>
<keyword id="KW-0547">Nucleotide-binding</keyword>
<keyword id="KW-0648">Protein biosynthesis</keyword>
<keyword id="KW-0862">Zinc</keyword>
<name>SYE_LISW6</name>
<accession>A0AF36</accession>
<proteinExistence type="inferred from homology"/>
<evidence type="ECO:0000255" key="1">
    <source>
        <dbReference type="HAMAP-Rule" id="MF_00022"/>
    </source>
</evidence>
<feature type="chain" id="PRO_1000001920" description="Glutamate--tRNA ligase">
    <location>
        <begin position="1"/>
        <end position="491"/>
    </location>
</feature>
<feature type="short sequence motif" description="'HIGH' region" evidence="1">
    <location>
        <begin position="13"/>
        <end position="23"/>
    </location>
</feature>
<feature type="short sequence motif" description="'KMSKS' region" evidence="1">
    <location>
        <begin position="254"/>
        <end position="258"/>
    </location>
</feature>
<feature type="binding site" evidence="1">
    <location>
        <position position="110"/>
    </location>
    <ligand>
        <name>Zn(2+)</name>
        <dbReference type="ChEBI" id="CHEBI:29105"/>
    </ligand>
</feature>
<feature type="binding site" evidence="1">
    <location>
        <position position="112"/>
    </location>
    <ligand>
        <name>Zn(2+)</name>
        <dbReference type="ChEBI" id="CHEBI:29105"/>
    </ligand>
</feature>
<feature type="binding site" evidence="1">
    <location>
        <position position="137"/>
    </location>
    <ligand>
        <name>Zn(2+)</name>
        <dbReference type="ChEBI" id="CHEBI:29105"/>
    </ligand>
</feature>
<feature type="binding site" evidence="1">
    <location>
        <position position="139"/>
    </location>
    <ligand>
        <name>Zn(2+)</name>
        <dbReference type="ChEBI" id="CHEBI:29105"/>
    </ligand>
</feature>
<feature type="binding site" evidence="1">
    <location>
        <position position="257"/>
    </location>
    <ligand>
        <name>ATP</name>
        <dbReference type="ChEBI" id="CHEBI:30616"/>
    </ligand>
</feature>
<gene>
    <name evidence="1" type="primary">gltX</name>
    <name type="ordered locus">lwe0200</name>
</gene>
<organism>
    <name type="scientific">Listeria welshimeri serovar 6b (strain ATCC 35897 / DSM 20650 / CCUG 15529 / CIP 8149 / NCTC 11857 / SLCC 5334 / V8)</name>
    <dbReference type="NCBI Taxonomy" id="386043"/>
    <lineage>
        <taxon>Bacteria</taxon>
        <taxon>Bacillati</taxon>
        <taxon>Bacillota</taxon>
        <taxon>Bacilli</taxon>
        <taxon>Bacillales</taxon>
        <taxon>Listeriaceae</taxon>
        <taxon>Listeria</taxon>
    </lineage>
</organism>
<comment type="function">
    <text evidence="1">Catalyzes the attachment of glutamate to tRNA(Glu) in a two-step reaction: glutamate is first activated by ATP to form Glu-AMP and then transferred to the acceptor end of tRNA(Glu).</text>
</comment>
<comment type="catalytic activity">
    <reaction evidence="1">
        <text>tRNA(Glu) + L-glutamate + ATP = L-glutamyl-tRNA(Glu) + AMP + diphosphate</text>
        <dbReference type="Rhea" id="RHEA:23540"/>
        <dbReference type="Rhea" id="RHEA-COMP:9663"/>
        <dbReference type="Rhea" id="RHEA-COMP:9680"/>
        <dbReference type="ChEBI" id="CHEBI:29985"/>
        <dbReference type="ChEBI" id="CHEBI:30616"/>
        <dbReference type="ChEBI" id="CHEBI:33019"/>
        <dbReference type="ChEBI" id="CHEBI:78442"/>
        <dbReference type="ChEBI" id="CHEBI:78520"/>
        <dbReference type="ChEBI" id="CHEBI:456215"/>
        <dbReference type="EC" id="6.1.1.17"/>
    </reaction>
</comment>
<comment type="cofactor">
    <cofactor evidence="1">
        <name>Zn(2+)</name>
        <dbReference type="ChEBI" id="CHEBI:29105"/>
    </cofactor>
    <text evidence="1">Binds 1 zinc ion per subunit.</text>
</comment>
<comment type="subunit">
    <text evidence="1">Monomer.</text>
</comment>
<comment type="subcellular location">
    <subcellularLocation>
        <location evidence="1">Cytoplasm</location>
    </subcellularLocation>
</comment>
<comment type="similarity">
    <text evidence="1">Belongs to the class-I aminoacyl-tRNA synthetase family. Glutamate--tRNA ligase type 1 subfamily.</text>
</comment>
<reference key="1">
    <citation type="journal article" date="2006" name="J. Bacteriol.">
        <title>Whole-genome sequence of Listeria welshimeri reveals common steps in genome reduction with Listeria innocua as compared to Listeria monocytogenes.</title>
        <authorList>
            <person name="Hain T."/>
            <person name="Steinweg C."/>
            <person name="Kuenne C.T."/>
            <person name="Billion A."/>
            <person name="Ghai R."/>
            <person name="Chatterjee S.S."/>
            <person name="Domann E."/>
            <person name="Kaerst U."/>
            <person name="Goesmann A."/>
            <person name="Bekel T."/>
            <person name="Bartels D."/>
            <person name="Kaiser O."/>
            <person name="Meyer F."/>
            <person name="Puehler A."/>
            <person name="Weisshaar B."/>
            <person name="Wehland J."/>
            <person name="Liang C."/>
            <person name="Dandekar T."/>
            <person name="Lampidis R."/>
            <person name="Kreft J."/>
            <person name="Goebel W."/>
            <person name="Chakraborty T."/>
        </authorList>
    </citation>
    <scope>NUCLEOTIDE SEQUENCE [LARGE SCALE GENOMIC DNA]</scope>
    <source>
        <strain>ATCC 35897 / DSM 20650 / CCUG 15529 / CIP 8149 / NCTC 11857 / SLCC 5334 / V8</strain>
    </source>
</reference>